<comment type="function">
    <text evidence="2 4 6 7 9 10">Divalent metal cation transporter which exports Zn(2+), Cd(2+) and possibly Fe(2+) (PubMed:14960568, PubMed:15549269, PubMed:16049012, PubMed:16790427, PubMed:19749753, PubMed:22529353). May be involved in zinc and iron detoxification by efflux (PubMed:15549269, PubMed:19749753). In vitro, can also bind, but probably not transport, Hg(2+), Co(2+), Ni(2+), Mn(2+), Ca(2+) and Mg(2+) (PubMed:14960568, PubMed:16049012, PubMed:16790427).</text>
</comment>
<comment type="catalytic activity">
    <reaction evidence="1 4 10 13">
        <text>Zn(2+)(in) + H(+)(out) = Zn(2+)(out) + H(+)(in)</text>
        <dbReference type="Rhea" id="RHEA:28839"/>
        <dbReference type="ChEBI" id="CHEBI:15378"/>
        <dbReference type="ChEBI" id="CHEBI:29105"/>
    </reaction>
</comment>
<comment type="catalytic activity">
    <reaction evidence="1 10 13 14">
        <text>Cd(2+)(in) + H(+)(out) = Cd(2+)(out) + H(+)(in)</text>
        <dbReference type="Rhea" id="RHEA:28739"/>
        <dbReference type="ChEBI" id="CHEBI:15378"/>
        <dbReference type="ChEBI" id="CHEBI:48775"/>
    </reaction>
</comment>
<comment type="catalytic activity">
    <reaction evidence="1 4">
        <text>Fe(2+)(in) + H(+)(out) = Fe(2+)(out) + H(+)(in)</text>
        <dbReference type="Rhea" id="RHEA:29439"/>
        <dbReference type="ChEBI" id="CHEBI:15378"/>
        <dbReference type="ChEBI" id="CHEBI:29033"/>
    </reaction>
</comment>
<comment type="activity regulation">
    <text evidence="9">Cytoplasmic zinc binding may trigger movements of two electrically repulsive cytoplasmic domains and reorient transmembrane helices, thereby modulating coordination geometry of the active site for zinc transport. It may modulate activity in response to cytoplasmic metal fluctuations.</text>
</comment>
<comment type="subunit">
    <text evidence="3 8 9">Homodimer (PubMed:15258151, PubMed:17717154, PubMed:19749753). The subunits are held together in a parallel orientation through zinc binding at the interface of the cytoplasmic domains (PubMed:17717154, PubMed:19749753).</text>
</comment>
<comment type="interaction">
    <interactant intactId="EBI-15802920">
        <id>P69380</id>
    </interactant>
    <interactant intactId="EBI-15802920">
        <id>P69380</id>
        <label>fieF</label>
    </interactant>
    <organismsDiffer>false</organismsDiffer>
    <experiments>2</experiments>
</comment>
<comment type="subcellular location">
    <subcellularLocation>
        <location evidence="1 5 6 9">Cell inner membrane</location>
        <topology evidence="1 6 9">Multi-pass membrane protein</topology>
    </subcellularLocation>
</comment>
<comment type="induction">
    <text evidence="4">Induced by iron and zinc.</text>
</comment>
<comment type="domain">
    <text evidence="8 9">The two transmembrane domains of the dimer swing out to yield a Y-shaped structure (PubMed:17717154, PubMed:19749753). In each protomer, the cytoplasmic domain adopts a metallochaperone-like protein fold (PubMed:17717154, PubMed:19749753). Each protomer contains three zinc-binding sites: a tetrahedral active Zn(2+) binding site for zinc transport, which is located toward the center of the transmembrane domain, and two cytoplasmic Zn(2+) binding sites that may serve as zinc sensors and regulate activity (PubMed:17717154, PubMed:19749753).</text>
</comment>
<comment type="miscellaneous">
    <text evidence="6 7">Asp-49 and Asp-157 are required for both metal binding and transport process (PubMed:16049012, PubMed:16790427). Asp-49 is a selective binding residue for Zn(2+), Cd(2+) and Fe(2+) (PubMed:16790427). Asp-157 is a highly specific coordination residue for Zn(2+) and Cd(2+), but not for Hg(2+) and Fe(2+) (PubMed:16049012).</text>
</comment>
<comment type="similarity">
    <text evidence="1 12">Belongs to the cation diffusion facilitator (CDF) transporter (TC 2.A.4) family. FieF subfamily.</text>
</comment>
<keyword id="KW-0002">3D-structure</keyword>
<keyword id="KW-0997">Cell inner membrane</keyword>
<keyword id="KW-1003">Cell membrane</keyword>
<keyword id="KW-0406">Ion transport</keyword>
<keyword id="KW-0408">Iron</keyword>
<keyword id="KW-0410">Iron transport</keyword>
<keyword id="KW-0472">Membrane</keyword>
<keyword id="KW-0479">Metal-binding</keyword>
<keyword id="KW-1185">Reference proteome</keyword>
<keyword id="KW-0812">Transmembrane</keyword>
<keyword id="KW-1133">Transmembrane helix</keyword>
<keyword id="KW-0813">Transport</keyword>
<keyword id="KW-0862">Zinc</keyword>
<keyword id="KW-0864">Zinc transport</keyword>
<sequence length="300" mass="32927">MNQSYGRLVSRAAIAATAMASLLLLIKIFAWWYTGSVSILAALVDSLVDIGASLTNLLVVRYSLQPADDNHSFGHGKAESLAALAQSMFISGSALFLFLTGIQHLISPTPMTDPGVGVIVTIVALICTIILVSFQRWVVRRTQSQAVRADMLHYQSDVMMNGAILLALGLSWYGWHRADALFALGIGIYILYSALRMGYEAVQSLLDRALPDEERQEIIDIVTSWPGVSGAHDLRTRQSGPTRFIQIHLEMEDSLPLVQAHMVADQVEQAILRRFPGSDVIIHQDPCSVVPREGKRSMLS</sequence>
<protein>
    <recommendedName>
        <fullName evidence="1 12">Cation-efflux pump FieF</fullName>
    </recommendedName>
    <alternativeName>
        <fullName>Ferrous-iron efflux pump FieF</fullName>
    </alternativeName>
</protein>
<dbReference type="EMBL" id="L19201">
    <property type="protein sequence ID" value="AAB03047.1"/>
    <property type="molecule type" value="Genomic_DNA"/>
</dbReference>
<dbReference type="EMBL" id="U00096">
    <property type="protein sequence ID" value="AAC76897.1"/>
    <property type="molecule type" value="Genomic_DNA"/>
</dbReference>
<dbReference type="EMBL" id="AP009048">
    <property type="protein sequence ID" value="BAE77395.1"/>
    <property type="molecule type" value="Genomic_DNA"/>
</dbReference>
<dbReference type="PIR" id="S40858">
    <property type="entry name" value="S40858"/>
</dbReference>
<dbReference type="RefSeq" id="NP_418350.1">
    <property type="nucleotide sequence ID" value="NC_000913.3"/>
</dbReference>
<dbReference type="RefSeq" id="WP_001076742.1">
    <property type="nucleotide sequence ID" value="NZ_SSZK01000014.1"/>
</dbReference>
<dbReference type="PDB" id="2QFI">
    <property type="method" value="X-ray"/>
    <property type="resolution" value="3.80 A"/>
    <property type="chains" value="A/B=1-300"/>
</dbReference>
<dbReference type="PDB" id="3H90">
    <property type="method" value="X-ray"/>
    <property type="resolution" value="2.90 A"/>
    <property type="chains" value="A/B/C/D=8-290"/>
</dbReference>
<dbReference type="PDBsum" id="2QFI"/>
<dbReference type="PDBsum" id="3H90"/>
<dbReference type="SMR" id="P69380"/>
<dbReference type="BioGRID" id="4261076">
    <property type="interactions" value="7"/>
</dbReference>
<dbReference type="DIP" id="DIP-48564N"/>
<dbReference type="FunCoup" id="P69380">
    <property type="interactions" value="525"/>
</dbReference>
<dbReference type="STRING" id="511145.b3915"/>
<dbReference type="TCDB" id="2.A.4.7.1">
    <property type="family name" value="the cation diffusion facilitator (cdf) family"/>
</dbReference>
<dbReference type="PaxDb" id="511145-b3915"/>
<dbReference type="EnsemblBacteria" id="AAC76897">
    <property type="protein sequence ID" value="AAC76897"/>
    <property type="gene ID" value="b3915"/>
</dbReference>
<dbReference type="GeneID" id="75204588"/>
<dbReference type="GeneID" id="948413"/>
<dbReference type="KEGG" id="ecj:JW3886"/>
<dbReference type="KEGG" id="eco:b3915"/>
<dbReference type="KEGG" id="ecoc:C3026_21165"/>
<dbReference type="PATRIC" id="fig|1411691.4.peg.2790"/>
<dbReference type="EchoBASE" id="EB1819"/>
<dbReference type="eggNOG" id="COG0053">
    <property type="taxonomic scope" value="Bacteria"/>
</dbReference>
<dbReference type="HOGENOM" id="CLU_013430_3_0_6"/>
<dbReference type="InParanoid" id="P69380"/>
<dbReference type="OMA" id="HDYGPGR"/>
<dbReference type="OrthoDB" id="9806522at2"/>
<dbReference type="PhylomeDB" id="P69380"/>
<dbReference type="BioCyc" id="EcoCyc:YIIP-MONOMER"/>
<dbReference type="BioCyc" id="MetaCyc:YIIP-MONOMER"/>
<dbReference type="EvolutionaryTrace" id="P69380"/>
<dbReference type="PRO" id="PR:P69380"/>
<dbReference type="Proteomes" id="UP000000625">
    <property type="component" value="Chromosome"/>
</dbReference>
<dbReference type="GO" id="GO:0005886">
    <property type="term" value="C:plasma membrane"/>
    <property type="evidence" value="ECO:0000314"/>
    <property type="project" value="EcoCyc"/>
</dbReference>
<dbReference type="GO" id="GO:0015086">
    <property type="term" value="F:cadmium ion transmembrane transporter activity"/>
    <property type="evidence" value="ECO:0000314"/>
    <property type="project" value="EcoCyc"/>
</dbReference>
<dbReference type="GO" id="GO:0015093">
    <property type="term" value="F:ferrous iron transmembrane transporter activity"/>
    <property type="evidence" value="ECO:0000314"/>
    <property type="project" value="EcoCyc"/>
</dbReference>
<dbReference type="GO" id="GO:0042802">
    <property type="term" value="F:identical protein binding"/>
    <property type="evidence" value="ECO:0000353"/>
    <property type="project" value="IntAct"/>
</dbReference>
<dbReference type="GO" id="GO:0046872">
    <property type="term" value="F:metal ion binding"/>
    <property type="evidence" value="ECO:0007669"/>
    <property type="project" value="UniProtKB-KW"/>
</dbReference>
<dbReference type="GO" id="GO:0015341">
    <property type="term" value="F:zinc efflux antiporter activity"/>
    <property type="evidence" value="ECO:0000314"/>
    <property type="project" value="EcoCyc"/>
</dbReference>
<dbReference type="GO" id="GO:0140826">
    <property type="term" value="F:zinc:proton antiporter activity"/>
    <property type="evidence" value="ECO:0000314"/>
    <property type="project" value="EcoCyc"/>
</dbReference>
<dbReference type="GO" id="GO:0070574">
    <property type="term" value="P:cadmium ion transmembrane transport"/>
    <property type="evidence" value="ECO:0000314"/>
    <property type="project" value="EcoCyc"/>
</dbReference>
<dbReference type="GO" id="GO:0006879">
    <property type="term" value="P:intracellular iron ion homeostasis"/>
    <property type="evidence" value="ECO:0000314"/>
    <property type="project" value="EcoCyc"/>
</dbReference>
<dbReference type="GO" id="GO:0006882">
    <property type="term" value="P:intracellular zinc ion homeostasis"/>
    <property type="evidence" value="ECO:0000270"/>
    <property type="project" value="EcoCyc"/>
</dbReference>
<dbReference type="GO" id="GO:0034755">
    <property type="term" value="P:iron ion transmembrane transport"/>
    <property type="evidence" value="ECO:0000314"/>
    <property type="project" value="EcoCyc"/>
</dbReference>
<dbReference type="GO" id="GO:0071577">
    <property type="term" value="P:zinc ion transmembrane transport"/>
    <property type="evidence" value="ECO:0000314"/>
    <property type="project" value="EcoCyc"/>
</dbReference>
<dbReference type="FunFam" id="1.20.1510.10:FF:000001">
    <property type="entry name" value="Ferrous-iron efflux pump FieF"/>
    <property type="match status" value="1"/>
</dbReference>
<dbReference type="FunFam" id="3.30.70.1350:FF:000002">
    <property type="entry name" value="Ferrous-iron efflux pump FieF"/>
    <property type="match status" value="1"/>
</dbReference>
<dbReference type="Gene3D" id="1.20.1510.10">
    <property type="entry name" value="Cation efflux protein transmembrane domain"/>
    <property type="match status" value="1"/>
</dbReference>
<dbReference type="Gene3D" id="3.30.70.1350">
    <property type="entry name" value="Cation efflux protein, cytoplasmic domain"/>
    <property type="match status" value="1"/>
</dbReference>
<dbReference type="HAMAP" id="MF_01425">
    <property type="entry name" value="Cation_efflux_FieF"/>
    <property type="match status" value="1"/>
</dbReference>
<dbReference type="InterPro" id="IPR002524">
    <property type="entry name" value="Cation_efflux"/>
</dbReference>
<dbReference type="InterPro" id="IPR027470">
    <property type="entry name" value="Cation_efflux_CTD"/>
</dbReference>
<dbReference type="InterPro" id="IPR036837">
    <property type="entry name" value="Cation_efflux_CTD_sf"/>
</dbReference>
<dbReference type="InterPro" id="IPR023783">
    <property type="entry name" value="Cation_efflux_FieF"/>
</dbReference>
<dbReference type="InterPro" id="IPR027469">
    <property type="entry name" value="Cation_efflux_TMD_sf"/>
</dbReference>
<dbReference type="InterPro" id="IPR050291">
    <property type="entry name" value="CDF_Transporter"/>
</dbReference>
<dbReference type="NCBIfam" id="TIGR01297">
    <property type="entry name" value="CDF"/>
    <property type="match status" value="1"/>
</dbReference>
<dbReference type="NCBIfam" id="NF007064">
    <property type="entry name" value="PRK09509.1"/>
    <property type="match status" value="1"/>
</dbReference>
<dbReference type="PANTHER" id="PTHR43840:SF41">
    <property type="entry name" value="CATION-EFFLUX PUMP FIEF"/>
    <property type="match status" value="1"/>
</dbReference>
<dbReference type="PANTHER" id="PTHR43840">
    <property type="entry name" value="MITOCHONDRIAL METAL TRANSPORTER 1-RELATED"/>
    <property type="match status" value="1"/>
</dbReference>
<dbReference type="Pfam" id="PF01545">
    <property type="entry name" value="Cation_efflux"/>
    <property type="match status" value="1"/>
</dbReference>
<dbReference type="Pfam" id="PF16916">
    <property type="entry name" value="ZT_dimer"/>
    <property type="match status" value="1"/>
</dbReference>
<dbReference type="SUPFAM" id="SSF160240">
    <property type="entry name" value="Cation efflux protein cytoplasmic domain-like"/>
    <property type="match status" value="1"/>
</dbReference>
<dbReference type="SUPFAM" id="SSF161111">
    <property type="entry name" value="Cation efflux protein transmembrane domain-like"/>
    <property type="match status" value="1"/>
</dbReference>
<gene>
    <name evidence="1 11" type="primary">fieF</name>
    <name type="synonym">yiiP</name>
    <name type="ordered locus">b3915</name>
    <name type="ordered locus">JW3886</name>
</gene>
<proteinExistence type="evidence at protein level"/>
<accession>P69380</accession>
<accession>P32159</accession>
<accession>Q2M8L1</accession>
<name>FIEF_ECOLI</name>
<organism>
    <name type="scientific">Escherichia coli (strain K12)</name>
    <dbReference type="NCBI Taxonomy" id="83333"/>
    <lineage>
        <taxon>Bacteria</taxon>
        <taxon>Pseudomonadati</taxon>
        <taxon>Pseudomonadota</taxon>
        <taxon>Gammaproteobacteria</taxon>
        <taxon>Enterobacterales</taxon>
        <taxon>Enterobacteriaceae</taxon>
        <taxon>Escherichia</taxon>
    </lineage>
</organism>
<evidence type="ECO:0000255" key="1">
    <source>
        <dbReference type="HAMAP-Rule" id="MF_01425"/>
    </source>
</evidence>
<evidence type="ECO:0000269" key="2">
    <source>
    </source>
</evidence>
<evidence type="ECO:0000269" key="3">
    <source>
    </source>
</evidence>
<evidence type="ECO:0000269" key="4">
    <source>
    </source>
</evidence>
<evidence type="ECO:0000269" key="5">
    <source>
    </source>
</evidence>
<evidence type="ECO:0000269" key="6">
    <source>
    </source>
</evidence>
<evidence type="ECO:0000269" key="7">
    <source>
    </source>
</evidence>
<evidence type="ECO:0000269" key="8">
    <source>
    </source>
</evidence>
<evidence type="ECO:0000269" key="9">
    <source>
    </source>
</evidence>
<evidence type="ECO:0000269" key="10">
    <source>
    </source>
</evidence>
<evidence type="ECO:0000303" key="11">
    <source>
    </source>
</evidence>
<evidence type="ECO:0000305" key="12"/>
<evidence type="ECO:0000305" key="13">
    <source>
    </source>
</evidence>
<evidence type="ECO:0000305" key="14">
    <source>
    </source>
</evidence>
<evidence type="ECO:0000305" key="15">
    <source>
    </source>
</evidence>
<evidence type="ECO:0007744" key="16">
    <source>
        <dbReference type="PDB" id="2QFI"/>
    </source>
</evidence>
<evidence type="ECO:0007744" key="17">
    <source>
        <dbReference type="PDB" id="3H90"/>
    </source>
</evidence>
<evidence type="ECO:0007829" key="18">
    <source>
        <dbReference type="PDB" id="3H90"/>
    </source>
</evidence>
<feature type="chain" id="PRO_0000206124" description="Cation-efflux pump FieF">
    <location>
        <begin position="1"/>
        <end position="300"/>
    </location>
</feature>
<feature type="topological domain" description="Cytoplasmic" evidence="6 9">
    <location>
        <begin position="1"/>
        <end position="16"/>
    </location>
</feature>
<feature type="transmembrane region" description="Helical" evidence="9">
    <location>
        <begin position="17"/>
        <end position="30"/>
    </location>
</feature>
<feature type="topological domain" description="Periplasmic" evidence="6 9">
    <location>
        <begin position="31"/>
        <end position="41"/>
    </location>
</feature>
<feature type="transmembrane region" description="Helical" evidence="9">
    <location>
        <begin position="42"/>
        <end position="58"/>
    </location>
</feature>
<feature type="topological domain" description="Cytoplasmic" evidence="6 9">
    <location>
        <begin position="59"/>
        <end position="81"/>
    </location>
</feature>
<feature type="transmembrane region" description="Helical" evidence="9">
    <location>
        <begin position="82"/>
        <end position="103"/>
    </location>
</feature>
<feature type="topological domain" description="Periplasmic" evidence="6 9">
    <location>
        <begin position="104"/>
        <end position="117"/>
    </location>
</feature>
<feature type="transmembrane region" description="Helical" evidence="9">
    <location>
        <begin position="118"/>
        <end position="136"/>
    </location>
</feature>
<feature type="topological domain" description="Cytoplasmic" evidence="6 9">
    <location>
        <begin position="137"/>
        <end position="147"/>
    </location>
</feature>
<feature type="transmembrane region" description="Helical" evidence="9">
    <location>
        <begin position="148"/>
        <end position="158"/>
    </location>
</feature>
<feature type="topological domain" description="Periplasmic" evidence="6 9">
    <location>
        <begin position="159"/>
        <end position="178"/>
    </location>
</feature>
<feature type="transmembrane region" description="Helical" evidence="9">
    <location>
        <begin position="179"/>
        <end position="198"/>
    </location>
</feature>
<feature type="topological domain" description="Cytoplasmic" evidence="5 6 9">
    <location>
        <begin position="199"/>
        <end position="300"/>
    </location>
</feature>
<feature type="binding site" evidence="15">
    <location>
        <position position="45"/>
    </location>
    <ligand>
        <name>Cd(2+)</name>
        <dbReference type="ChEBI" id="CHEBI:48775"/>
    </ligand>
</feature>
<feature type="binding site" evidence="8 9 14 16 17">
    <location>
        <position position="45"/>
    </location>
    <ligand>
        <name>Zn(2+)</name>
        <dbReference type="ChEBI" id="CHEBI:29105"/>
        <label>1</label>
        <note>transported zinc</note>
    </ligand>
</feature>
<feature type="binding site" evidence="15">
    <location>
        <position position="49"/>
    </location>
    <ligand>
        <name>Cd(2+)</name>
        <dbReference type="ChEBI" id="CHEBI:48775"/>
    </ligand>
</feature>
<feature type="binding site" evidence="8 9 14 16 17">
    <location>
        <position position="49"/>
    </location>
    <ligand>
        <name>Zn(2+)</name>
        <dbReference type="ChEBI" id="CHEBI:29105"/>
        <label>1</label>
        <note>transported zinc</note>
    </ligand>
</feature>
<feature type="binding site" evidence="8 9 16 17">
    <location>
        <position position="68"/>
    </location>
    <ligand>
        <name>Zn(2+)</name>
        <dbReference type="ChEBI" id="CHEBI:29105"/>
        <label>2</label>
        <note>regulatory</note>
    </ligand>
</feature>
<feature type="binding site" evidence="9 17">
    <location>
        <position position="71"/>
    </location>
    <ligand>
        <name>Zn(2+)</name>
        <dbReference type="ChEBI" id="CHEBI:29105"/>
        <label>2</label>
        <note>regulatory</note>
    </ligand>
</feature>
<feature type="binding site" evidence="8 9 16 17">
    <location>
        <position position="75"/>
    </location>
    <ligand>
        <name>Zn(2+)</name>
        <dbReference type="ChEBI" id="CHEBI:29105"/>
        <label>2</label>
        <note>regulatory</note>
    </ligand>
</feature>
<feature type="binding site" evidence="15">
    <location>
        <position position="153"/>
    </location>
    <ligand>
        <name>Cd(2+)</name>
        <dbReference type="ChEBI" id="CHEBI:48775"/>
    </ligand>
</feature>
<feature type="binding site" evidence="8 9 14 16 17">
    <location>
        <position position="153"/>
    </location>
    <ligand>
        <name>Zn(2+)</name>
        <dbReference type="ChEBI" id="CHEBI:29105"/>
        <label>1</label>
        <note>transported zinc</note>
    </ligand>
</feature>
<feature type="binding site" evidence="15">
    <location>
        <position position="157"/>
    </location>
    <ligand>
        <name>Cd(2+)</name>
        <dbReference type="ChEBI" id="CHEBI:48775"/>
    </ligand>
</feature>
<feature type="binding site" evidence="8 9 13 16 17">
    <location>
        <position position="157"/>
    </location>
    <ligand>
        <name>Zn(2+)</name>
        <dbReference type="ChEBI" id="CHEBI:29105"/>
        <label>1</label>
        <note>transported zinc</note>
    </ligand>
</feature>
<feature type="binding site" evidence="9 17">
    <location>
        <position position="232"/>
    </location>
    <ligand>
        <name>Zn(2+)</name>
        <dbReference type="ChEBI" id="CHEBI:29105"/>
        <label>3</label>
        <note>regulatory</note>
    </ligand>
</feature>
<feature type="binding site" evidence="9 17">
    <location>
        <position position="248"/>
    </location>
    <ligand>
        <name>Zn(2+)</name>
        <dbReference type="ChEBI" id="CHEBI:29105"/>
        <label>3</label>
        <note>regulatory</note>
    </ligand>
</feature>
<feature type="binding site" evidence="9 17">
    <location>
        <position position="261"/>
    </location>
    <ligand>
        <name>Zn(2+)</name>
        <dbReference type="ChEBI" id="CHEBI:29105"/>
        <label>4</label>
        <note>regulatory</note>
    </ligand>
</feature>
<feature type="binding site" evidence="9 17">
    <location>
        <position position="283"/>
    </location>
    <ligand>
        <name>Zn(2+)</name>
        <dbReference type="ChEBI" id="CHEBI:29105"/>
        <label>4</label>
        <note>regulatory</note>
    </ligand>
</feature>
<feature type="binding site" evidence="9 17">
    <location>
        <position position="285"/>
    </location>
    <ligand>
        <name>Zn(2+)</name>
        <dbReference type="ChEBI" id="CHEBI:29105"/>
        <label>3</label>
        <note>regulatory</note>
    </ligand>
</feature>
<feature type="binding site" evidence="9 17">
    <location>
        <position position="285"/>
    </location>
    <ligand>
        <name>Zn(2+)</name>
        <dbReference type="ChEBI" id="CHEBI:29105"/>
        <label>4</label>
        <note>regulatory</note>
    </ligand>
</feature>
<feature type="mutagenesis site" description="Loss of cadmium ion transmembrane transporter activity. No effect on zinc ion transmembrane transporter activity." evidence="10">
    <original>D</original>
    <variation>H</variation>
    <location>
        <position position="45"/>
    </location>
</feature>
<feature type="mutagenesis site" description="Disrupts one Cd(2+)/Zn(2+)-binding site and abolishes Cd(2+)/Zn(2+) transport." evidence="7">
    <original>D</original>
    <variation>A</variation>
    <location>
        <position position="49"/>
    </location>
</feature>
<feature type="mutagenesis site" description="Does not affect binding and transport of Cd(2+) and Zn(2+). Can form a Cys-49-Hg(2+)-Cys-49 biscysteinate complex across the dimer interface." evidence="7">
    <original>D</original>
    <variation>C</variation>
    <location>
        <position position="49"/>
    </location>
</feature>
<feature type="mutagenesis site" description="Abolishes Zn(2+) transport activity." evidence="9">
    <original>K</original>
    <variation>D</variation>
    <location>
        <position position="77"/>
    </location>
</feature>
<feature type="mutagenesis site" description="Disrupts one Cd(2+)/Zn(2+)-binding site and abolishes Cd(2+)/Zn(2+) transport. Does not alter binding of Fe(2+) or Hg(2+)." evidence="6">
    <original>D</original>
    <variation>A</variation>
    <location>
        <position position="157"/>
    </location>
</feature>
<feature type="mutagenesis site" description="Does not affect binding and transport of Cd(2+) and Zn(2+)." evidence="6">
    <original>D</original>
    <variation>C</variation>
    <location>
        <position position="157"/>
    </location>
</feature>
<feature type="mutagenesis site" description="Shows reduced Zn(2+) transport kinetics." evidence="9">
    <original>H</original>
    <variation>A</variation>
    <location>
        <position position="232"/>
    </location>
</feature>
<feature type="helix" evidence="18">
    <location>
        <begin position="12"/>
        <end position="21"/>
    </location>
</feature>
<feature type="helix" evidence="18">
    <location>
        <begin position="24"/>
        <end position="29"/>
    </location>
</feature>
<feature type="strand" evidence="18">
    <location>
        <begin position="33"/>
        <end position="37"/>
    </location>
</feature>
<feature type="turn" evidence="18">
    <location>
        <begin position="42"/>
        <end position="44"/>
    </location>
</feature>
<feature type="helix" evidence="18">
    <location>
        <begin position="45"/>
        <end position="63"/>
    </location>
</feature>
<feature type="helix" evidence="18">
    <location>
        <begin position="78"/>
        <end position="103"/>
    </location>
</feature>
<feature type="strand" evidence="18">
    <location>
        <begin position="105"/>
        <end position="108"/>
    </location>
</feature>
<feature type="helix" evidence="18">
    <location>
        <begin position="119"/>
        <end position="141"/>
    </location>
</feature>
<feature type="helix" evidence="18">
    <location>
        <begin position="145"/>
        <end position="158"/>
    </location>
</feature>
<feature type="strand" evidence="18">
    <location>
        <begin position="166"/>
        <end position="168"/>
    </location>
</feature>
<feature type="helix" evidence="18">
    <location>
        <begin position="180"/>
        <end position="205"/>
    </location>
</feature>
<feature type="helix" evidence="18">
    <location>
        <begin position="212"/>
        <end position="224"/>
    </location>
</feature>
<feature type="strand" evidence="18">
    <location>
        <begin position="225"/>
        <end position="227"/>
    </location>
</feature>
<feature type="strand" evidence="18">
    <location>
        <begin position="229"/>
        <end position="239"/>
    </location>
</feature>
<feature type="strand" evidence="18">
    <location>
        <begin position="242"/>
        <end position="250"/>
    </location>
</feature>
<feature type="helix" evidence="18">
    <location>
        <begin position="257"/>
        <end position="274"/>
    </location>
</feature>
<feature type="strand" evidence="18">
    <location>
        <begin position="279"/>
        <end position="285"/>
    </location>
</feature>
<reference key="1">
    <citation type="journal article" date="1993" name="Nucleic Acids Res.">
        <title>Analysis of the Escherichia coli genome. III. DNA sequence of the region from 87.2 to 89.2 minutes.</title>
        <authorList>
            <person name="Plunkett G. III"/>
            <person name="Burland V."/>
            <person name="Daniels D.L."/>
            <person name="Blattner F.R."/>
        </authorList>
    </citation>
    <scope>NUCLEOTIDE SEQUENCE [LARGE SCALE GENOMIC DNA]</scope>
    <source>
        <strain>K12 / MG1655 / ATCC 47076</strain>
    </source>
</reference>
<reference key="2">
    <citation type="journal article" date="1997" name="Science">
        <title>The complete genome sequence of Escherichia coli K-12.</title>
        <authorList>
            <person name="Blattner F.R."/>
            <person name="Plunkett G. III"/>
            <person name="Bloch C.A."/>
            <person name="Perna N.T."/>
            <person name="Burland V."/>
            <person name="Riley M."/>
            <person name="Collado-Vides J."/>
            <person name="Glasner J.D."/>
            <person name="Rode C.K."/>
            <person name="Mayhew G.F."/>
            <person name="Gregor J."/>
            <person name="Davis N.W."/>
            <person name="Kirkpatrick H.A."/>
            <person name="Goeden M.A."/>
            <person name="Rose D.J."/>
            <person name="Mau B."/>
            <person name="Shao Y."/>
        </authorList>
    </citation>
    <scope>NUCLEOTIDE SEQUENCE [LARGE SCALE GENOMIC DNA]</scope>
    <source>
        <strain>K12 / MG1655 / ATCC 47076</strain>
    </source>
</reference>
<reference key="3">
    <citation type="journal article" date="2006" name="Mol. Syst. Biol.">
        <title>Highly accurate genome sequences of Escherichia coli K-12 strains MG1655 and W3110.</title>
        <authorList>
            <person name="Hayashi K."/>
            <person name="Morooka N."/>
            <person name="Yamamoto Y."/>
            <person name="Fujita K."/>
            <person name="Isono K."/>
            <person name="Choi S."/>
            <person name="Ohtsubo E."/>
            <person name="Baba T."/>
            <person name="Wanner B.L."/>
            <person name="Mori H."/>
            <person name="Horiuchi T."/>
        </authorList>
    </citation>
    <scope>NUCLEOTIDE SEQUENCE [LARGE SCALE GENOMIC DNA]</scope>
    <source>
        <strain>K12 / W3110 / ATCC 27325 / DSM 5911</strain>
    </source>
</reference>
<reference key="4">
    <citation type="journal article" date="2004" name="J. Biol. Chem.">
        <title>Thermodynamic studies of the mechanism of metal binding to the Escherichia coli zinc transporter YiiP.</title>
        <authorList>
            <person name="Chao Y."/>
            <person name="Fu D."/>
        </authorList>
    </citation>
    <scope>FUNCTION</scope>
    <scope>METAL BINDING</scope>
</reference>
<reference key="5">
    <citation type="journal article" date="2004" name="J. Biol. Chem.">
        <title>Oligomeric state of the Escherichia coli metal transporter YiiP.</title>
        <authorList>
            <person name="Wei Y."/>
            <person name="Li H."/>
            <person name="Fu D."/>
        </authorList>
    </citation>
    <scope>SUBUNIT</scope>
</reference>
<reference key="6">
    <citation type="journal article" date="2005" name="Arch. Microbiol.">
        <title>FieF (YiiP) from Escherichia coli mediates decreased cellular accumulation of iron and relieves iron stress.</title>
        <authorList>
            <person name="Grass G."/>
            <person name="Otto M."/>
            <person name="Fricke B."/>
            <person name="Haney C.J."/>
            <person name="Rensing C."/>
            <person name="Nies D.H."/>
            <person name="Munkelt D."/>
        </authorList>
    </citation>
    <scope>FUNCTION</scope>
    <scope>CATALYTIC ACTIVITY</scope>
    <scope>INDUCTION</scope>
    <source>
        <strain>K12 / W3110 / ATCC 27325 / DSM 5911</strain>
    </source>
</reference>
<reference key="7">
    <citation type="journal article" date="2005" name="J. Biol. Chem.">
        <title>Selective metal binding to a membrane-embedded aspartate in the Escherichia coli metal transporter YiiP (FieF).</title>
        <authorList>
            <person name="Wei Y."/>
            <person name="Fu D."/>
        </authorList>
    </citation>
    <scope>FUNCTION</scope>
    <scope>METAL BINDING</scope>
    <scope>SUBCELLULAR LOCATION</scope>
    <scope>TOPOLOGY</scope>
    <scope>MUTAGENESIS OF ASP-157</scope>
</reference>
<reference key="8">
    <citation type="journal article" date="2005" name="Science">
        <title>Global topology analysis of the Escherichia coli inner membrane proteome.</title>
        <authorList>
            <person name="Daley D.O."/>
            <person name="Rapp M."/>
            <person name="Granseth E."/>
            <person name="Melen K."/>
            <person name="Drew D."/>
            <person name="von Heijne G."/>
        </authorList>
    </citation>
    <scope>TOPOLOGY [LARGE SCALE ANALYSIS]</scope>
    <scope>SUBCELLULAR LOCATION</scope>
    <source>
        <strain>K12 / MG1655 / ATCC 47076</strain>
    </source>
</reference>
<reference key="9">
    <citation type="journal article" date="2006" name="J. Biol. Chem.">
        <title>Binding and transport of metal ions at the dimer interface of the Escherichia coli metal transporter YiiP.</title>
        <authorList>
            <person name="Wei Y."/>
            <person name="Fu D."/>
        </authorList>
    </citation>
    <scope>FUNCTION</scope>
    <scope>METAL BINDING</scope>
    <scope>MUTAGENESIS OF ASP-49</scope>
</reference>
<reference key="10">
    <citation type="journal article" date="2012" name="Proc. Natl. Acad. Sci. U.S.A.">
        <title>Histidine pairing at the metal transport site of mammalian ZnT transporters controls Zn2+ over Cd2+ selectivity.</title>
        <authorList>
            <person name="Hoch E."/>
            <person name="Lin W."/>
            <person name="Chai J."/>
            <person name="Hershfinkel M."/>
            <person name="Fu D."/>
            <person name="Sekler I."/>
        </authorList>
    </citation>
    <scope>FUNCTION</scope>
    <scope>TRANSPORTER ACTIVITY</scope>
    <scope>MUTAGENESIS OF ASP-45</scope>
    <scope>CADMIUM BINDING</scope>
</reference>
<reference evidence="16" key="11">
    <citation type="journal article" date="2007" name="Science">
        <title>Structure of the zinc transporter YiiP.</title>
        <authorList>
            <person name="Lu M."/>
            <person name="Fu D."/>
        </authorList>
    </citation>
    <scope>X-RAY CRYSTALLOGRAPHY (3.80 ANGSTROMS) IN COMPLEX WITH ZINC</scope>
    <scope>SUBUNIT</scope>
    <scope>DOMAIN</scope>
</reference>
<reference evidence="17" key="12">
    <citation type="journal article" date="2009" name="Nat. Struct. Mol. Biol.">
        <title>Structural basis for autoregulation of the zinc transporter YiiP.</title>
        <authorList>
            <person name="Lu M."/>
            <person name="Chai J."/>
            <person name="Fu D."/>
        </authorList>
    </citation>
    <scope>X-RAY CRYSTALLOGRAPHY (2.90 ANGSTROMS) OF 8-290 IN COMPLEX WITH ZINC</scope>
    <scope>FUNCTION</scope>
    <scope>ACTIVITY REGULATION</scope>
    <scope>SUBUNIT</scope>
    <scope>SUBCELLULAR LOCATION</scope>
    <scope>TOPOLOGY</scope>
    <scope>DOMAIN</scope>
    <scope>MUTAGENESIS OF LYS-77 AND HIS-232</scope>
</reference>